<sequence length="177" mass="20063">MANLWEDLETGPDAPDVIYAVVECLKGERNKYEYDKDIPGVVLDRVLHSNVHYPSDYGFIPQSYYDDGDPFDVLVLVEDQTFPGCVIEARPVALMEMDDDGEQDDKVIAVPEEDPRYDDVEDVDDLTDQQKAEIAEFFETYKNLEADKETAVLGWGDAQAAKDAIEHAQDLYDEQFA</sequence>
<evidence type="ECO:0000255" key="1">
    <source>
        <dbReference type="HAMAP-Rule" id="MF_00209"/>
    </source>
</evidence>
<reference key="1">
    <citation type="journal article" date="2000" name="Proc. Natl. Acad. Sci. U.S.A.">
        <title>Genome sequence of Halobacterium species NRC-1.</title>
        <authorList>
            <person name="Ng W.V."/>
            <person name="Kennedy S.P."/>
            <person name="Mahairas G.G."/>
            <person name="Berquist B."/>
            <person name="Pan M."/>
            <person name="Shukla H.D."/>
            <person name="Lasky S.R."/>
            <person name="Baliga N.S."/>
            <person name="Thorsson V."/>
            <person name="Sbrogna J."/>
            <person name="Swartzell S."/>
            <person name="Weir D."/>
            <person name="Hall J."/>
            <person name="Dahl T.A."/>
            <person name="Welti R."/>
            <person name="Goo Y.A."/>
            <person name="Leithauser B."/>
            <person name="Keller K."/>
            <person name="Cruz R."/>
            <person name="Danson M.J."/>
            <person name="Hough D.W."/>
            <person name="Maddocks D.G."/>
            <person name="Jablonski P.E."/>
            <person name="Krebs M.P."/>
            <person name="Angevine C.M."/>
            <person name="Dale H."/>
            <person name="Isenbarger T.A."/>
            <person name="Peck R.F."/>
            <person name="Pohlschroder M."/>
            <person name="Spudich J.L."/>
            <person name="Jung K.-H."/>
            <person name="Alam M."/>
            <person name="Freitas T."/>
            <person name="Hou S."/>
            <person name="Daniels C.J."/>
            <person name="Dennis P.P."/>
            <person name="Omer A.D."/>
            <person name="Ebhardt H."/>
            <person name="Lowe T.M."/>
            <person name="Liang P."/>
            <person name="Riley M."/>
            <person name="Hood L."/>
            <person name="DasSarma S."/>
        </authorList>
    </citation>
    <scope>NUCLEOTIDE SEQUENCE [LARGE SCALE GENOMIC DNA]</scope>
    <source>
        <strain>ATCC 700922 / JCM 11081 / NRC-1</strain>
    </source>
</reference>
<organism>
    <name type="scientific">Halobacterium salinarum (strain ATCC 700922 / JCM 11081 / NRC-1)</name>
    <name type="common">Halobacterium halobium</name>
    <dbReference type="NCBI Taxonomy" id="64091"/>
    <lineage>
        <taxon>Archaea</taxon>
        <taxon>Methanobacteriati</taxon>
        <taxon>Methanobacteriota</taxon>
        <taxon>Stenosarchaea group</taxon>
        <taxon>Halobacteria</taxon>
        <taxon>Halobacteriales</taxon>
        <taxon>Halobacteriaceae</taxon>
        <taxon>Halobacterium</taxon>
        <taxon>Halobacterium salinarum NRC-34001</taxon>
    </lineage>
</organism>
<keyword id="KW-0963">Cytoplasm</keyword>
<keyword id="KW-0378">Hydrolase</keyword>
<keyword id="KW-0460">Magnesium</keyword>
<keyword id="KW-0479">Metal-binding</keyword>
<keyword id="KW-1185">Reference proteome</keyword>
<dbReference type="EC" id="3.6.1.1" evidence="1"/>
<dbReference type="EMBL" id="AE004437">
    <property type="protein sequence ID" value="AAG18854.1"/>
    <property type="molecule type" value="Genomic_DNA"/>
</dbReference>
<dbReference type="PIR" id="B84186">
    <property type="entry name" value="B84186"/>
</dbReference>
<dbReference type="RefSeq" id="WP_010902148.1">
    <property type="nucleotide sequence ID" value="NC_002607.1"/>
</dbReference>
<dbReference type="SMR" id="Q9HSF3"/>
<dbReference type="STRING" id="64091.VNG_0259G"/>
<dbReference type="PaxDb" id="64091-VNG_0259G"/>
<dbReference type="KEGG" id="hal:VNG_0259G"/>
<dbReference type="PATRIC" id="fig|64091.14.peg.190"/>
<dbReference type="HOGENOM" id="CLU_073198_1_2_2"/>
<dbReference type="InParanoid" id="Q9HSF3"/>
<dbReference type="OrthoDB" id="134160at2157"/>
<dbReference type="PhylomeDB" id="Q9HSF3"/>
<dbReference type="Proteomes" id="UP000000554">
    <property type="component" value="Chromosome"/>
</dbReference>
<dbReference type="GO" id="GO:0005737">
    <property type="term" value="C:cytoplasm"/>
    <property type="evidence" value="ECO:0007669"/>
    <property type="project" value="UniProtKB-SubCell"/>
</dbReference>
<dbReference type="GO" id="GO:0004427">
    <property type="term" value="F:inorganic diphosphate phosphatase activity"/>
    <property type="evidence" value="ECO:0000318"/>
    <property type="project" value="GO_Central"/>
</dbReference>
<dbReference type="GO" id="GO:0000287">
    <property type="term" value="F:magnesium ion binding"/>
    <property type="evidence" value="ECO:0007669"/>
    <property type="project" value="UniProtKB-UniRule"/>
</dbReference>
<dbReference type="GO" id="GO:0006796">
    <property type="term" value="P:phosphate-containing compound metabolic process"/>
    <property type="evidence" value="ECO:0000318"/>
    <property type="project" value="GO_Central"/>
</dbReference>
<dbReference type="CDD" id="cd00412">
    <property type="entry name" value="pyrophosphatase"/>
    <property type="match status" value="1"/>
</dbReference>
<dbReference type="FunFam" id="3.90.80.10:FF:000003">
    <property type="entry name" value="Inorganic pyrophosphatase"/>
    <property type="match status" value="1"/>
</dbReference>
<dbReference type="Gene3D" id="3.90.80.10">
    <property type="entry name" value="Inorganic pyrophosphatase"/>
    <property type="match status" value="1"/>
</dbReference>
<dbReference type="HAMAP" id="MF_00209">
    <property type="entry name" value="Inorganic_PPase"/>
    <property type="match status" value="1"/>
</dbReference>
<dbReference type="InterPro" id="IPR008162">
    <property type="entry name" value="Pyrophosphatase"/>
</dbReference>
<dbReference type="InterPro" id="IPR036649">
    <property type="entry name" value="Pyrophosphatase_sf"/>
</dbReference>
<dbReference type="PANTHER" id="PTHR10286">
    <property type="entry name" value="INORGANIC PYROPHOSPHATASE"/>
    <property type="match status" value="1"/>
</dbReference>
<dbReference type="Pfam" id="PF00719">
    <property type="entry name" value="Pyrophosphatase"/>
    <property type="match status" value="1"/>
</dbReference>
<dbReference type="SUPFAM" id="SSF50324">
    <property type="entry name" value="Inorganic pyrophosphatase"/>
    <property type="match status" value="1"/>
</dbReference>
<dbReference type="PROSITE" id="PS00387">
    <property type="entry name" value="PPASE"/>
    <property type="match status" value="1"/>
</dbReference>
<gene>
    <name evidence="1" type="primary">ppa</name>
    <name type="synonym">ipp</name>
    <name type="ordered locus">VNG_0259G</name>
</gene>
<accession>Q9HSF3</accession>
<name>IPYR_HALSA</name>
<protein>
    <recommendedName>
        <fullName evidence="1">Inorganic pyrophosphatase</fullName>
        <ecNumber evidence="1">3.6.1.1</ecNumber>
    </recommendedName>
    <alternativeName>
        <fullName evidence="1">Pyrophosphate phospho-hydrolase</fullName>
        <shortName evidence="1">PPase</shortName>
    </alternativeName>
</protein>
<feature type="chain" id="PRO_0000137548" description="Inorganic pyrophosphatase">
    <location>
        <begin position="1"/>
        <end position="177"/>
    </location>
</feature>
<feature type="binding site" evidence="1">
    <location>
        <position position="31"/>
    </location>
    <ligand>
        <name>substrate</name>
    </ligand>
</feature>
<feature type="binding site" evidence="1">
    <location>
        <position position="45"/>
    </location>
    <ligand>
        <name>substrate</name>
    </ligand>
</feature>
<feature type="binding site" evidence="1">
    <location>
        <position position="57"/>
    </location>
    <ligand>
        <name>substrate</name>
    </ligand>
</feature>
<feature type="binding site" evidence="1">
    <location>
        <position position="67"/>
    </location>
    <ligand>
        <name>Mg(2+)</name>
        <dbReference type="ChEBI" id="CHEBI:18420"/>
        <label>1</label>
    </ligand>
</feature>
<feature type="binding site" evidence="1">
    <location>
        <position position="72"/>
    </location>
    <ligand>
        <name>Mg(2+)</name>
        <dbReference type="ChEBI" id="CHEBI:18420"/>
        <label>1</label>
    </ligand>
</feature>
<feature type="binding site" evidence="1">
    <location>
        <position position="72"/>
    </location>
    <ligand>
        <name>Mg(2+)</name>
        <dbReference type="ChEBI" id="CHEBI:18420"/>
        <label>2</label>
    </ligand>
</feature>
<feature type="binding site" evidence="1">
    <location>
        <position position="104"/>
    </location>
    <ligand>
        <name>Mg(2+)</name>
        <dbReference type="ChEBI" id="CHEBI:18420"/>
        <label>1</label>
    </ligand>
</feature>
<feature type="binding site" evidence="1">
    <location>
        <position position="141"/>
    </location>
    <ligand>
        <name>substrate</name>
    </ligand>
</feature>
<comment type="function">
    <text evidence="1">Catalyzes the hydrolysis of inorganic pyrophosphate (PPi) forming two phosphate ions.</text>
</comment>
<comment type="catalytic activity">
    <reaction evidence="1">
        <text>diphosphate + H2O = 2 phosphate + H(+)</text>
        <dbReference type="Rhea" id="RHEA:24576"/>
        <dbReference type="ChEBI" id="CHEBI:15377"/>
        <dbReference type="ChEBI" id="CHEBI:15378"/>
        <dbReference type="ChEBI" id="CHEBI:33019"/>
        <dbReference type="ChEBI" id="CHEBI:43474"/>
        <dbReference type="EC" id="3.6.1.1"/>
    </reaction>
</comment>
<comment type="cofactor">
    <cofactor evidence="1">
        <name>Mg(2+)</name>
        <dbReference type="ChEBI" id="CHEBI:18420"/>
    </cofactor>
</comment>
<comment type="subunit">
    <text evidence="1">Homohexamer.</text>
</comment>
<comment type="subcellular location">
    <subcellularLocation>
        <location evidence="1">Cytoplasm</location>
    </subcellularLocation>
</comment>
<comment type="similarity">
    <text evidence="1">Belongs to the PPase family.</text>
</comment>
<proteinExistence type="inferred from homology"/>